<name>NRFA_HAEDU</name>
<keyword id="KW-0106">Calcium</keyword>
<keyword id="KW-0249">Electron transport</keyword>
<keyword id="KW-0349">Heme</keyword>
<keyword id="KW-0408">Iron</keyword>
<keyword id="KW-0479">Metal-binding</keyword>
<keyword id="KW-0560">Oxidoreductase</keyword>
<keyword id="KW-0574">Periplasm</keyword>
<keyword id="KW-1185">Reference proteome</keyword>
<keyword id="KW-0732">Signal</keyword>
<keyword id="KW-0813">Transport</keyword>
<evidence type="ECO:0000255" key="1">
    <source>
        <dbReference type="HAMAP-Rule" id="MF_01182"/>
    </source>
</evidence>
<evidence type="ECO:0000256" key="2">
    <source>
        <dbReference type="SAM" id="MobiDB-lite"/>
    </source>
</evidence>
<evidence type="ECO:0000305" key="3"/>
<feature type="signal peptide" evidence="1">
    <location>
        <begin position="1"/>
        <end position="25"/>
    </location>
</feature>
<feature type="chain" id="PRO_0000268966" description="Cytochrome c-552">
    <location>
        <begin position="26"/>
        <end position="502"/>
    </location>
</feature>
<feature type="region of interest" description="Disordered" evidence="2">
    <location>
        <begin position="481"/>
        <end position="502"/>
    </location>
</feature>
<feature type="binding site" description="axial binding residue" evidence="1">
    <location>
        <position position="105"/>
    </location>
    <ligand>
        <name>heme c</name>
        <dbReference type="ChEBI" id="CHEBI:61717"/>
        <label>3</label>
    </ligand>
    <ligandPart>
        <name>Fe</name>
        <dbReference type="ChEBI" id="CHEBI:18248"/>
    </ligandPart>
</feature>
<feature type="binding site" description="covalent" evidence="1">
    <location>
        <position position="133"/>
    </location>
    <ligand>
        <name>heme</name>
        <dbReference type="ChEBI" id="CHEBI:30413"/>
        <label>1</label>
    </ligand>
</feature>
<feature type="binding site" description="covalent" evidence="1">
    <location>
        <position position="136"/>
    </location>
    <ligand>
        <name>heme</name>
        <dbReference type="ChEBI" id="CHEBI:30413"/>
        <label>1</label>
    </ligand>
</feature>
<feature type="binding site" description="axial binding residue" evidence="1">
    <location>
        <position position="137"/>
    </location>
    <ligand>
        <name>heme</name>
        <dbReference type="ChEBI" id="CHEBI:30413"/>
        <label>1</label>
    </ligand>
    <ligandPart>
        <name>Fe</name>
        <dbReference type="ChEBI" id="CHEBI:18248"/>
    </ligandPart>
</feature>
<feature type="binding site" description="covalent" evidence="1">
    <location>
        <position position="171"/>
    </location>
    <ligand>
        <name>heme c</name>
        <dbReference type="ChEBI" id="CHEBI:61717"/>
        <label>2</label>
    </ligand>
</feature>
<feature type="binding site" description="covalent" evidence="1">
    <location>
        <position position="174"/>
    </location>
    <ligand>
        <name>heme c</name>
        <dbReference type="ChEBI" id="CHEBI:61717"/>
        <label>2</label>
    </ligand>
</feature>
<feature type="binding site" description="axial binding residue" evidence="1">
    <location>
        <position position="175"/>
    </location>
    <ligand>
        <name>heme c</name>
        <dbReference type="ChEBI" id="CHEBI:61717"/>
        <label>2</label>
    </ligand>
    <ligandPart>
        <name>Fe</name>
        <dbReference type="ChEBI" id="CHEBI:18248"/>
    </ligandPart>
</feature>
<feature type="binding site" description="covalent" evidence="1">
    <location>
        <position position="220"/>
    </location>
    <ligand>
        <name>heme c</name>
        <dbReference type="ChEBI" id="CHEBI:61717"/>
        <label>3</label>
    </ligand>
</feature>
<feature type="binding site" description="covalent" evidence="1">
    <location>
        <position position="223"/>
    </location>
    <ligand>
        <name>heme c</name>
        <dbReference type="ChEBI" id="CHEBI:61717"/>
        <label>3</label>
    </ligand>
</feature>
<feature type="binding site" description="axial binding residue" evidence="1">
    <location>
        <position position="224"/>
    </location>
    <ligand>
        <name>heme c</name>
        <dbReference type="ChEBI" id="CHEBI:61717"/>
        <label>3</label>
    </ligand>
    <ligandPart>
        <name>Fe</name>
        <dbReference type="ChEBI" id="CHEBI:18248"/>
    </ligandPart>
</feature>
<feature type="binding site" evidence="1">
    <location>
        <position position="226"/>
    </location>
    <ligand>
        <name>Ca(2+)</name>
        <dbReference type="ChEBI" id="CHEBI:29108"/>
    </ligand>
</feature>
<feature type="binding site" evidence="1">
    <location>
        <position position="227"/>
    </location>
    <ligand>
        <name>Ca(2+)</name>
        <dbReference type="ChEBI" id="CHEBI:29108"/>
    </ligand>
</feature>
<feature type="binding site" evidence="1">
    <location>
        <position position="227"/>
    </location>
    <ligand>
        <name>substrate</name>
    </ligand>
</feature>
<feature type="binding site" evidence="1">
    <location>
        <position position="271"/>
    </location>
    <ligand>
        <name>Ca(2+)</name>
        <dbReference type="ChEBI" id="CHEBI:29108"/>
    </ligand>
</feature>
<feature type="binding site" evidence="1">
    <location>
        <position position="273"/>
    </location>
    <ligand>
        <name>Ca(2+)</name>
        <dbReference type="ChEBI" id="CHEBI:29108"/>
    </ligand>
</feature>
<feature type="binding site" evidence="1">
    <location>
        <position position="274"/>
    </location>
    <ligand>
        <name>substrate</name>
    </ligand>
</feature>
<feature type="binding site" description="axial binding residue" evidence="1">
    <location>
        <position position="285"/>
    </location>
    <ligand>
        <name>heme c</name>
        <dbReference type="ChEBI" id="CHEBI:61717"/>
        <label>5</label>
    </ligand>
    <ligandPart>
        <name>Fe</name>
        <dbReference type="ChEBI" id="CHEBI:18248"/>
    </ligandPart>
</feature>
<feature type="binding site" description="covalent" evidence="1">
    <location>
        <position position="292"/>
    </location>
    <ligand>
        <name>heme c</name>
        <dbReference type="ChEBI" id="CHEBI:61717"/>
        <label>4</label>
    </ligand>
</feature>
<feature type="binding site" description="covalent" evidence="1">
    <location>
        <position position="295"/>
    </location>
    <ligand>
        <name>heme c</name>
        <dbReference type="ChEBI" id="CHEBI:61717"/>
        <label>4</label>
    </ligand>
</feature>
<feature type="binding site" description="axial binding residue" evidence="1">
    <location>
        <position position="296"/>
    </location>
    <ligand>
        <name>heme c</name>
        <dbReference type="ChEBI" id="CHEBI:61717"/>
        <label>4</label>
    </ligand>
    <ligandPart>
        <name>Fe</name>
        <dbReference type="ChEBI" id="CHEBI:18248"/>
    </ligandPart>
</feature>
<feature type="binding site" description="axial binding residue" evidence="1">
    <location>
        <position position="311"/>
    </location>
    <ligand>
        <name>heme c</name>
        <dbReference type="ChEBI" id="CHEBI:61717"/>
        <label>2</label>
    </ligand>
    <ligandPart>
        <name>Fe</name>
        <dbReference type="ChEBI" id="CHEBI:18248"/>
    </ligandPart>
</feature>
<feature type="binding site" description="covalent" evidence="1">
    <location>
        <position position="324"/>
    </location>
    <ligand>
        <name>heme c</name>
        <dbReference type="ChEBI" id="CHEBI:61717"/>
        <label>5</label>
    </ligand>
</feature>
<feature type="binding site" description="covalent" evidence="1">
    <location>
        <position position="327"/>
    </location>
    <ligand>
        <name>heme c</name>
        <dbReference type="ChEBI" id="CHEBI:61717"/>
        <label>5</label>
    </ligand>
</feature>
<feature type="binding site" description="axial binding residue" evidence="1">
    <location>
        <position position="328"/>
    </location>
    <ligand>
        <name>heme c</name>
        <dbReference type="ChEBI" id="CHEBI:61717"/>
        <label>5</label>
    </ligand>
    <ligandPart>
        <name>Fe</name>
        <dbReference type="ChEBI" id="CHEBI:18248"/>
    </ligandPart>
</feature>
<feature type="binding site" description="axial binding residue" evidence="1">
    <location>
        <position position="403"/>
    </location>
    <ligand>
        <name>heme c</name>
        <dbReference type="ChEBI" id="CHEBI:61717"/>
        <label>4</label>
    </ligand>
    <ligandPart>
        <name>Fe</name>
        <dbReference type="ChEBI" id="CHEBI:18248"/>
    </ligandPart>
</feature>
<dbReference type="EC" id="1.7.2.2" evidence="1"/>
<dbReference type="EMBL" id="AE017143">
    <property type="protein sequence ID" value="AAP95319.1"/>
    <property type="status" value="ALT_INIT"/>
    <property type="molecule type" value="Genomic_DNA"/>
</dbReference>
<dbReference type="RefSeq" id="WP_041603357.1">
    <property type="nucleotide sequence ID" value="NC_002940.2"/>
</dbReference>
<dbReference type="SMR" id="Q7VNX8"/>
<dbReference type="STRING" id="233412.HD_0344"/>
<dbReference type="KEGG" id="hdu:HD_0344"/>
<dbReference type="eggNOG" id="COG3303">
    <property type="taxonomic scope" value="Bacteria"/>
</dbReference>
<dbReference type="HOGENOM" id="CLU_035040_1_0_6"/>
<dbReference type="OrthoDB" id="9780421at2"/>
<dbReference type="UniPathway" id="UPA00653"/>
<dbReference type="Proteomes" id="UP000001022">
    <property type="component" value="Chromosome"/>
</dbReference>
<dbReference type="GO" id="GO:0030288">
    <property type="term" value="C:outer membrane-bounded periplasmic space"/>
    <property type="evidence" value="ECO:0007669"/>
    <property type="project" value="TreeGrafter"/>
</dbReference>
<dbReference type="GO" id="GO:0005509">
    <property type="term" value="F:calcium ion binding"/>
    <property type="evidence" value="ECO:0007669"/>
    <property type="project" value="UniProtKB-UniRule"/>
</dbReference>
<dbReference type="GO" id="GO:0020037">
    <property type="term" value="F:heme binding"/>
    <property type="evidence" value="ECO:0007669"/>
    <property type="project" value="InterPro"/>
</dbReference>
<dbReference type="GO" id="GO:0005506">
    <property type="term" value="F:iron ion binding"/>
    <property type="evidence" value="ECO:0007669"/>
    <property type="project" value="UniProtKB-UniRule"/>
</dbReference>
<dbReference type="GO" id="GO:0042279">
    <property type="term" value="F:nitrite reductase (cytochrome, ammonia-forming) activity"/>
    <property type="evidence" value="ECO:0007669"/>
    <property type="project" value="UniProtKB-UniRule"/>
</dbReference>
<dbReference type="GO" id="GO:0019645">
    <property type="term" value="P:anaerobic electron transport chain"/>
    <property type="evidence" value="ECO:0007669"/>
    <property type="project" value="TreeGrafter"/>
</dbReference>
<dbReference type="GO" id="GO:0042128">
    <property type="term" value="P:nitrate assimilation"/>
    <property type="evidence" value="ECO:0007669"/>
    <property type="project" value="UniProtKB-UniRule"/>
</dbReference>
<dbReference type="CDD" id="cd00548">
    <property type="entry name" value="NrfA-like"/>
    <property type="match status" value="1"/>
</dbReference>
<dbReference type="FunFam" id="1.10.1130.10:FF:000002">
    <property type="entry name" value="Cytochrome c-552"/>
    <property type="match status" value="1"/>
</dbReference>
<dbReference type="FunFam" id="1.20.140.10:FF:000014">
    <property type="entry name" value="Cytochrome c-552"/>
    <property type="match status" value="1"/>
</dbReference>
<dbReference type="Gene3D" id="1.20.140.10">
    <property type="entry name" value="Butyryl-CoA Dehydrogenase, subunit A, domain 3"/>
    <property type="match status" value="1"/>
</dbReference>
<dbReference type="Gene3D" id="1.10.1130.10">
    <property type="entry name" value="Flavocytochrome C3, Chain A"/>
    <property type="match status" value="1"/>
</dbReference>
<dbReference type="HAMAP" id="MF_01182">
    <property type="entry name" value="Cytochrom_C552"/>
    <property type="match status" value="1"/>
</dbReference>
<dbReference type="InterPro" id="IPR003321">
    <property type="entry name" value="Cyt_c552"/>
</dbReference>
<dbReference type="InterPro" id="IPR017570">
    <property type="entry name" value="Cyt_c_NO2Rdtase_formate-dep"/>
</dbReference>
<dbReference type="InterPro" id="IPR036280">
    <property type="entry name" value="Multihaem_cyt_sf"/>
</dbReference>
<dbReference type="NCBIfam" id="TIGR03152">
    <property type="entry name" value="cyto_c552_HCOOH"/>
    <property type="match status" value="1"/>
</dbReference>
<dbReference type="NCBIfam" id="NF008339">
    <property type="entry name" value="PRK11125.1"/>
    <property type="match status" value="1"/>
</dbReference>
<dbReference type="PANTHER" id="PTHR30633:SF0">
    <property type="entry name" value="CYTOCHROME C-552"/>
    <property type="match status" value="1"/>
</dbReference>
<dbReference type="PANTHER" id="PTHR30633">
    <property type="entry name" value="CYTOCHROME C-552 RESPIRATORY NITRITE REDUCTASE"/>
    <property type="match status" value="1"/>
</dbReference>
<dbReference type="Pfam" id="PF02335">
    <property type="entry name" value="Cytochrom_C552"/>
    <property type="match status" value="1"/>
</dbReference>
<dbReference type="PIRSF" id="PIRSF000243">
    <property type="entry name" value="Cyt_c552"/>
    <property type="match status" value="1"/>
</dbReference>
<dbReference type="SUPFAM" id="SSF48695">
    <property type="entry name" value="Multiheme cytochromes"/>
    <property type="match status" value="1"/>
</dbReference>
<dbReference type="PROSITE" id="PS51008">
    <property type="entry name" value="MULTIHEME_CYTC"/>
    <property type="match status" value="1"/>
</dbReference>
<gene>
    <name evidence="1" type="primary">nrfA</name>
    <name type="ordered locus">HD_0344</name>
</gene>
<proteinExistence type="inferred from homology"/>
<protein>
    <recommendedName>
        <fullName evidence="1">Cytochrome c-552</fullName>
        <ecNumber evidence="1">1.7.2.2</ecNumber>
    </recommendedName>
    <alternativeName>
        <fullName evidence="1">Ammonia-forming cytochrome c nitrite reductase</fullName>
        <shortName evidence="1">Cytochrome c nitrite reductase</shortName>
    </alternativeName>
</protein>
<comment type="function">
    <text evidence="1">Catalyzes the reduction of nitrite to ammonia, consuming six electrons in the process.</text>
</comment>
<comment type="catalytic activity">
    <reaction evidence="1">
        <text>6 Fe(III)-[cytochrome c] + NH4(+) + 2 H2O = 6 Fe(II)-[cytochrome c] + nitrite + 8 H(+)</text>
        <dbReference type="Rhea" id="RHEA:13089"/>
        <dbReference type="Rhea" id="RHEA-COMP:10350"/>
        <dbReference type="Rhea" id="RHEA-COMP:14399"/>
        <dbReference type="ChEBI" id="CHEBI:15377"/>
        <dbReference type="ChEBI" id="CHEBI:15378"/>
        <dbReference type="ChEBI" id="CHEBI:16301"/>
        <dbReference type="ChEBI" id="CHEBI:28938"/>
        <dbReference type="ChEBI" id="CHEBI:29033"/>
        <dbReference type="ChEBI" id="CHEBI:29034"/>
        <dbReference type="EC" id="1.7.2.2"/>
    </reaction>
</comment>
<comment type="cofactor">
    <cofactor evidence="1">
        <name>Ca(2+)</name>
        <dbReference type="ChEBI" id="CHEBI:29108"/>
    </cofactor>
    <text evidence="1">Binds 1 Ca(2+) ion per monomer.</text>
</comment>
<comment type="cofactor">
    <cofactor evidence="1">
        <name>heme c</name>
        <dbReference type="ChEBI" id="CHEBI:61717"/>
    </cofactor>
    <text evidence="1">Binds 5 heme c groups covalently per monomer.</text>
</comment>
<comment type="pathway">
    <text evidence="1">Nitrogen metabolism; nitrate reduction (assimilation).</text>
</comment>
<comment type="subcellular location">
    <subcellularLocation>
        <location evidence="1">Periplasm</location>
    </subcellularLocation>
</comment>
<comment type="similarity">
    <text evidence="1">Belongs to the cytochrome c-552 family.</text>
</comment>
<comment type="sequence caution" evidence="3">
    <conflict type="erroneous initiation">
        <sequence resource="EMBL-CDS" id="AAP95319"/>
    </conflict>
</comment>
<reference key="1">
    <citation type="submission" date="2003-06" db="EMBL/GenBank/DDBJ databases">
        <title>The complete genome sequence of Haemophilus ducreyi.</title>
        <authorList>
            <person name="Munson R.S. Jr."/>
            <person name="Ray W.C."/>
            <person name="Mahairas G."/>
            <person name="Sabo P."/>
            <person name="Mungur R."/>
            <person name="Johnson L."/>
            <person name="Nguyen D."/>
            <person name="Wang J."/>
            <person name="Forst C."/>
            <person name="Hood L."/>
        </authorList>
    </citation>
    <scope>NUCLEOTIDE SEQUENCE [LARGE SCALE GENOMIC DNA]</scope>
    <source>
        <strain>35000HP / ATCC 700724</strain>
    </source>
</reference>
<organism>
    <name type="scientific">Haemophilus ducreyi (strain 35000HP / ATCC 700724)</name>
    <dbReference type="NCBI Taxonomy" id="233412"/>
    <lineage>
        <taxon>Bacteria</taxon>
        <taxon>Pseudomonadati</taxon>
        <taxon>Pseudomonadota</taxon>
        <taxon>Gammaproteobacteria</taxon>
        <taxon>Pasteurellales</taxon>
        <taxon>Pasteurellaceae</taxon>
        <taxon>Haemophilus</taxon>
    </lineage>
</organism>
<sequence>MKYLTKSRVIATIAMLGCLSVSAWAETPTNQPESLTDKALKHEKLGVVVESANHKFAEKYRLQYDSWKATAESTDRSSALEADPRLVVLWAGYAFAKEYNKPRGHYYAVTDVREILRTGAPKDENDGPQPMACWTCKGPDVPRLIEEKGERGYFDPKWAKYGAEIVNSIGCADCHDTTSKAFEEGKPALRVARPHVLRALESVGWRFEDLDKHGKRVAVCSNCHVEYYFKDKKDVTFPWAKGVDVDSIEKYYDESQFTDWTHALSKAPMLKTQHPDFEVWSQGVHGKNGVTCIDCHMPKVKDKDGKVYTEHKIGNPFDRFDATCKTCHEQSKQTLQDRVKEHKAQVKEAMIRLEDQIVKAHFEAKVAWDAGATAEEMQDILMAIRHAQWRWDYSAAGHGNHFHAPDVMLHTIATGLDRVADARAKLGVVLTKHGVETPIVMPDISTREKAQKAVGIDIAKDQAAKDEFLRTVVPQWERQARERGLLPEVTPKSVTTPKVDAK</sequence>
<accession>Q7VNX8</accession>